<sequence>MILLAAKGLSLLDVNPGLVVWTLITFLVVVLVLKKFAWDVILKALDERAQAVQNDIEKASELRLEAEALLKDYEARLNSAKDEANAIVAEARSDALKLKNKLLEETNQEVKAQKDQAVKEIELAKGKALEQLQTQFVEMTITIAGKVLEKQLKAEDYKAFIETELNKLGKLSA</sequence>
<organism>
    <name type="scientific">Leptospira borgpetersenii serovar Hardjo-bovis (strain JB197)</name>
    <dbReference type="NCBI Taxonomy" id="355277"/>
    <lineage>
        <taxon>Bacteria</taxon>
        <taxon>Pseudomonadati</taxon>
        <taxon>Spirochaetota</taxon>
        <taxon>Spirochaetia</taxon>
        <taxon>Leptospirales</taxon>
        <taxon>Leptospiraceae</taxon>
        <taxon>Leptospira</taxon>
    </lineage>
</organism>
<feature type="chain" id="PRO_0000368560" description="ATP synthase subunit b">
    <location>
        <begin position="1"/>
        <end position="173"/>
    </location>
</feature>
<feature type="transmembrane region" description="Helical" evidence="1">
    <location>
        <begin position="12"/>
        <end position="32"/>
    </location>
</feature>
<name>ATPF_LEPBJ</name>
<comment type="function">
    <text evidence="1">F(1)F(0) ATP synthase produces ATP from ADP in the presence of a proton or sodium gradient. F-type ATPases consist of two structural domains, F(1) containing the extramembraneous catalytic core and F(0) containing the membrane proton channel, linked together by a central stalk and a peripheral stalk. During catalysis, ATP synthesis in the catalytic domain of F(1) is coupled via a rotary mechanism of the central stalk subunits to proton translocation.</text>
</comment>
<comment type="function">
    <text evidence="1">Component of the F(0) channel, it forms part of the peripheral stalk, linking F(1) to F(0).</text>
</comment>
<comment type="subunit">
    <text evidence="1">F-type ATPases have 2 components, F(1) - the catalytic core - and F(0) - the membrane proton channel. F(1) has five subunits: alpha(3), beta(3), gamma(1), delta(1), epsilon(1). F(0) has three main subunits: a(1), b(2) and c(10-14). The alpha and beta chains form an alternating ring which encloses part of the gamma chain. F(1) is attached to F(0) by a central stalk formed by the gamma and epsilon chains, while a peripheral stalk is formed by the delta and b chains.</text>
</comment>
<comment type="subcellular location">
    <subcellularLocation>
        <location evidence="1">Cell inner membrane</location>
        <topology evidence="1">Single-pass membrane protein</topology>
    </subcellularLocation>
</comment>
<comment type="similarity">
    <text evidence="1">Belongs to the ATPase B chain family.</text>
</comment>
<gene>
    <name evidence="1" type="primary">atpF</name>
    <name type="ordered locus">LBJ_1756</name>
</gene>
<protein>
    <recommendedName>
        <fullName evidence="1">ATP synthase subunit b</fullName>
    </recommendedName>
    <alternativeName>
        <fullName evidence="1">ATP synthase F(0) sector subunit b</fullName>
    </alternativeName>
    <alternativeName>
        <fullName evidence="1">ATPase subunit I</fullName>
    </alternativeName>
    <alternativeName>
        <fullName evidence="1">F-type ATPase subunit b</fullName>
        <shortName evidence="1">F-ATPase subunit b</shortName>
    </alternativeName>
</protein>
<evidence type="ECO:0000255" key="1">
    <source>
        <dbReference type="HAMAP-Rule" id="MF_01398"/>
    </source>
</evidence>
<keyword id="KW-0066">ATP synthesis</keyword>
<keyword id="KW-0997">Cell inner membrane</keyword>
<keyword id="KW-1003">Cell membrane</keyword>
<keyword id="KW-0138">CF(0)</keyword>
<keyword id="KW-0375">Hydrogen ion transport</keyword>
<keyword id="KW-0406">Ion transport</keyword>
<keyword id="KW-0472">Membrane</keyword>
<keyword id="KW-0812">Transmembrane</keyword>
<keyword id="KW-1133">Transmembrane helix</keyword>
<keyword id="KW-0813">Transport</keyword>
<proteinExistence type="inferred from homology"/>
<dbReference type="EMBL" id="CP000350">
    <property type="protein sequence ID" value="ABJ76306.1"/>
    <property type="molecule type" value="Genomic_DNA"/>
</dbReference>
<dbReference type="RefSeq" id="WP_002754296.1">
    <property type="nucleotide sequence ID" value="NC_008510.1"/>
</dbReference>
<dbReference type="SMR" id="Q04S14"/>
<dbReference type="KEGG" id="lbj:LBJ_1756"/>
<dbReference type="HOGENOM" id="CLU_079215_4_1_12"/>
<dbReference type="Proteomes" id="UP000000656">
    <property type="component" value="Chromosome 1"/>
</dbReference>
<dbReference type="GO" id="GO:0005886">
    <property type="term" value="C:plasma membrane"/>
    <property type="evidence" value="ECO:0007669"/>
    <property type="project" value="UniProtKB-SubCell"/>
</dbReference>
<dbReference type="GO" id="GO:0045259">
    <property type="term" value="C:proton-transporting ATP synthase complex"/>
    <property type="evidence" value="ECO:0007669"/>
    <property type="project" value="UniProtKB-KW"/>
</dbReference>
<dbReference type="GO" id="GO:0046933">
    <property type="term" value="F:proton-transporting ATP synthase activity, rotational mechanism"/>
    <property type="evidence" value="ECO:0007669"/>
    <property type="project" value="UniProtKB-UniRule"/>
</dbReference>
<dbReference type="GO" id="GO:0046961">
    <property type="term" value="F:proton-transporting ATPase activity, rotational mechanism"/>
    <property type="evidence" value="ECO:0007669"/>
    <property type="project" value="TreeGrafter"/>
</dbReference>
<dbReference type="CDD" id="cd06503">
    <property type="entry name" value="ATP-synt_Fo_b"/>
    <property type="match status" value="1"/>
</dbReference>
<dbReference type="HAMAP" id="MF_01398">
    <property type="entry name" value="ATP_synth_b_bprime"/>
    <property type="match status" value="1"/>
</dbReference>
<dbReference type="InterPro" id="IPR002146">
    <property type="entry name" value="ATP_synth_b/b'su_bac/chlpt"/>
</dbReference>
<dbReference type="InterPro" id="IPR005864">
    <property type="entry name" value="ATP_synth_F0_bsu_bac"/>
</dbReference>
<dbReference type="InterPro" id="IPR050059">
    <property type="entry name" value="ATP_synthase_B_chain"/>
</dbReference>
<dbReference type="NCBIfam" id="TIGR01144">
    <property type="entry name" value="ATP_synt_b"/>
    <property type="match status" value="1"/>
</dbReference>
<dbReference type="NCBIfam" id="NF009991">
    <property type="entry name" value="PRK13460.1"/>
    <property type="match status" value="1"/>
</dbReference>
<dbReference type="PANTHER" id="PTHR33445:SF1">
    <property type="entry name" value="ATP SYNTHASE SUBUNIT B"/>
    <property type="match status" value="1"/>
</dbReference>
<dbReference type="PANTHER" id="PTHR33445">
    <property type="entry name" value="ATP SYNTHASE SUBUNIT B', CHLOROPLASTIC"/>
    <property type="match status" value="1"/>
</dbReference>
<dbReference type="Pfam" id="PF00430">
    <property type="entry name" value="ATP-synt_B"/>
    <property type="match status" value="1"/>
</dbReference>
<accession>Q04S14</accession>
<reference key="1">
    <citation type="journal article" date="2006" name="Proc. Natl. Acad. Sci. U.S.A.">
        <title>Genome reduction in Leptospira borgpetersenii reflects limited transmission potential.</title>
        <authorList>
            <person name="Bulach D.M."/>
            <person name="Zuerner R.L."/>
            <person name="Wilson P."/>
            <person name="Seemann T."/>
            <person name="McGrath A."/>
            <person name="Cullen P.A."/>
            <person name="Davis J."/>
            <person name="Johnson M."/>
            <person name="Kuczek E."/>
            <person name="Alt D.P."/>
            <person name="Peterson-Burch B."/>
            <person name="Coppel R.L."/>
            <person name="Rood J.I."/>
            <person name="Davies J.K."/>
            <person name="Adler B."/>
        </authorList>
    </citation>
    <scope>NUCLEOTIDE SEQUENCE [LARGE SCALE GENOMIC DNA]</scope>
    <source>
        <strain>JB197</strain>
    </source>
</reference>